<evidence type="ECO:0000255" key="1">
    <source>
        <dbReference type="HAMAP-Rule" id="MF_00318"/>
    </source>
</evidence>
<sequence length="422" mass="46212">MHIHKIQAREILDSRGNPTIEADVILTTGIIGRASVPSGASTGSREACELRDNDPKRYAGKGVQKAVKHVNNEINQALQGLSVEDQENLDRILCQLDNTENKSHLGANAILATSLACARARALSLNQPLYITLNQGDMMTMPVPMMNILNGGAHADNNVDIQEFMIMPIGAPDFPVALQMGTEIFHVLKSVLKKQGLNTAVGDEGGFAPNIQSNRQALDLLSEAIEKAGFRLGEDIVFALDVAASELFNEGFYHMYSENQKFDSHQLIEYYANLISSYPIVSIEDGLDEKDWSGWKQLTTHLGNKVQLVGDDLFVTNPKILREGIAQGIANAILIKVNQIGTLSETRQAIKLAYDNGYRCVMSHRSGETEDTFIADLAVASGCGQIKTGSLCRTDRTAKYNQLLRINELASLPYAGKNILKR</sequence>
<keyword id="KW-0963">Cytoplasm</keyword>
<keyword id="KW-0324">Glycolysis</keyword>
<keyword id="KW-0456">Lyase</keyword>
<keyword id="KW-0460">Magnesium</keyword>
<keyword id="KW-0479">Metal-binding</keyword>
<keyword id="KW-0964">Secreted</keyword>
<comment type="function">
    <text evidence="1">Catalyzes the reversible conversion of 2-phosphoglycerate (2-PG) into phosphoenolpyruvate (PEP). It is essential for the degradation of carbohydrates via glycolysis.</text>
</comment>
<comment type="catalytic activity">
    <reaction evidence="1">
        <text>(2R)-2-phosphoglycerate = phosphoenolpyruvate + H2O</text>
        <dbReference type="Rhea" id="RHEA:10164"/>
        <dbReference type="ChEBI" id="CHEBI:15377"/>
        <dbReference type="ChEBI" id="CHEBI:58289"/>
        <dbReference type="ChEBI" id="CHEBI:58702"/>
        <dbReference type="EC" id="4.2.1.11"/>
    </reaction>
</comment>
<comment type="cofactor">
    <cofactor evidence="1">
        <name>Mg(2+)</name>
        <dbReference type="ChEBI" id="CHEBI:18420"/>
    </cofactor>
    <text evidence="1">Binds a second Mg(2+) ion via substrate during catalysis.</text>
</comment>
<comment type="pathway">
    <text evidence="1">Carbohydrate degradation; glycolysis; pyruvate from D-glyceraldehyde 3-phosphate: step 4/5.</text>
</comment>
<comment type="subunit">
    <text evidence="1">Component of the RNA degradosome, a multiprotein complex involved in RNA processing and mRNA degradation.</text>
</comment>
<comment type="subcellular location">
    <subcellularLocation>
        <location evidence="1">Cytoplasm</location>
    </subcellularLocation>
    <subcellularLocation>
        <location evidence="1">Secreted</location>
    </subcellularLocation>
    <subcellularLocation>
        <location evidence="1">Cell surface</location>
    </subcellularLocation>
    <text evidence="1">Fractions of enolase are present in both the cytoplasm and on the cell surface.</text>
</comment>
<comment type="similarity">
    <text evidence="1">Belongs to the enolase family.</text>
</comment>
<dbReference type="EC" id="4.2.1.11" evidence="1"/>
<dbReference type="EMBL" id="CR628336">
    <property type="protein sequence ID" value="CAH13172.1"/>
    <property type="molecule type" value="Genomic_DNA"/>
</dbReference>
<dbReference type="SMR" id="Q5X3L4"/>
<dbReference type="KEGG" id="lpp:lpp2020"/>
<dbReference type="LegioList" id="lpp2020"/>
<dbReference type="HOGENOM" id="CLU_031223_2_1_6"/>
<dbReference type="UniPathway" id="UPA00109">
    <property type="reaction ID" value="UER00187"/>
</dbReference>
<dbReference type="GO" id="GO:0009986">
    <property type="term" value="C:cell surface"/>
    <property type="evidence" value="ECO:0007669"/>
    <property type="project" value="UniProtKB-SubCell"/>
</dbReference>
<dbReference type="GO" id="GO:0005576">
    <property type="term" value="C:extracellular region"/>
    <property type="evidence" value="ECO:0007669"/>
    <property type="project" value="UniProtKB-SubCell"/>
</dbReference>
<dbReference type="GO" id="GO:0000015">
    <property type="term" value="C:phosphopyruvate hydratase complex"/>
    <property type="evidence" value="ECO:0007669"/>
    <property type="project" value="InterPro"/>
</dbReference>
<dbReference type="GO" id="GO:0000287">
    <property type="term" value="F:magnesium ion binding"/>
    <property type="evidence" value="ECO:0007669"/>
    <property type="project" value="UniProtKB-UniRule"/>
</dbReference>
<dbReference type="GO" id="GO:0004634">
    <property type="term" value="F:phosphopyruvate hydratase activity"/>
    <property type="evidence" value="ECO:0007669"/>
    <property type="project" value="UniProtKB-UniRule"/>
</dbReference>
<dbReference type="GO" id="GO:0006096">
    <property type="term" value="P:glycolytic process"/>
    <property type="evidence" value="ECO:0007669"/>
    <property type="project" value="UniProtKB-UniRule"/>
</dbReference>
<dbReference type="CDD" id="cd03313">
    <property type="entry name" value="enolase"/>
    <property type="match status" value="1"/>
</dbReference>
<dbReference type="FunFam" id="3.30.390.10:FF:000001">
    <property type="entry name" value="Enolase"/>
    <property type="match status" value="1"/>
</dbReference>
<dbReference type="Gene3D" id="3.20.20.120">
    <property type="entry name" value="Enolase-like C-terminal domain"/>
    <property type="match status" value="1"/>
</dbReference>
<dbReference type="Gene3D" id="3.30.390.10">
    <property type="entry name" value="Enolase-like, N-terminal domain"/>
    <property type="match status" value="1"/>
</dbReference>
<dbReference type="HAMAP" id="MF_00318">
    <property type="entry name" value="Enolase"/>
    <property type="match status" value="1"/>
</dbReference>
<dbReference type="InterPro" id="IPR000941">
    <property type="entry name" value="Enolase"/>
</dbReference>
<dbReference type="InterPro" id="IPR036849">
    <property type="entry name" value="Enolase-like_C_sf"/>
</dbReference>
<dbReference type="InterPro" id="IPR029017">
    <property type="entry name" value="Enolase-like_N"/>
</dbReference>
<dbReference type="InterPro" id="IPR020810">
    <property type="entry name" value="Enolase_C"/>
</dbReference>
<dbReference type="InterPro" id="IPR020809">
    <property type="entry name" value="Enolase_CS"/>
</dbReference>
<dbReference type="InterPro" id="IPR020811">
    <property type="entry name" value="Enolase_N"/>
</dbReference>
<dbReference type="NCBIfam" id="TIGR01060">
    <property type="entry name" value="eno"/>
    <property type="match status" value="1"/>
</dbReference>
<dbReference type="PANTHER" id="PTHR11902">
    <property type="entry name" value="ENOLASE"/>
    <property type="match status" value="1"/>
</dbReference>
<dbReference type="PANTHER" id="PTHR11902:SF1">
    <property type="entry name" value="ENOLASE"/>
    <property type="match status" value="1"/>
</dbReference>
<dbReference type="Pfam" id="PF00113">
    <property type="entry name" value="Enolase_C"/>
    <property type="match status" value="1"/>
</dbReference>
<dbReference type="Pfam" id="PF03952">
    <property type="entry name" value="Enolase_N"/>
    <property type="match status" value="1"/>
</dbReference>
<dbReference type="PIRSF" id="PIRSF001400">
    <property type="entry name" value="Enolase"/>
    <property type="match status" value="1"/>
</dbReference>
<dbReference type="PRINTS" id="PR00148">
    <property type="entry name" value="ENOLASE"/>
</dbReference>
<dbReference type="SFLD" id="SFLDF00002">
    <property type="entry name" value="enolase"/>
    <property type="match status" value="1"/>
</dbReference>
<dbReference type="SFLD" id="SFLDG00178">
    <property type="entry name" value="enolase"/>
    <property type="match status" value="1"/>
</dbReference>
<dbReference type="SMART" id="SM01192">
    <property type="entry name" value="Enolase_C"/>
    <property type="match status" value="1"/>
</dbReference>
<dbReference type="SMART" id="SM01193">
    <property type="entry name" value="Enolase_N"/>
    <property type="match status" value="1"/>
</dbReference>
<dbReference type="SUPFAM" id="SSF51604">
    <property type="entry name" value="Enolase C-terminal domain-like"/>
    <property type="match status" value="1"/>
</dbReference>
<dbReference type="SUPFAM" id="SSF54826">
    <property type="entry name" value="Enolase N-terminal domain-like"/>
    <property type="match status" value="1"/>
</dbReference>
<dbReference type="PROSITE" id="PS00164">
    <property type="entry name" value="ENOLASE"/>
    <property type="match status" value="1"/>
</dbReference>
<proteinExistence type="inferred from homology"/>
<name>ENO_LEGPA</name>
<reference key="1">
    <citation type="journal article" date="2004" name="Nat. Genet.">
        <title>Evidence in the Legionella pneumophila genome for exploitation of host cell functions and high genome plasticity.</title>
        <authorList>
            <person name="Cazalet C."/>
            <person name="Rusniok C."/>
            <person name="Brueggemann H."/>
            <person name="Zidane N."/>
            <person name="Magnier A."/>
            <person name="Ma L."/>
            <person name="Tichit M."/>
            <person name="Jarraud S."/>
            <person name="Bouchier C."/>
            <person name="Vandenesch F."/>
            <person name="Kunst F."/>
            <person name="Etienne J."/>
            <person name="Glaser P."/>
            <person name="Buchrieser C."/>
        </authorList>
    </citation>
    <scope>NUCLEOTIDE SEQUENCE [LARGE SCALE GENOMIC DNA]</scope>
    <source>
        <strain>Paris</strain>
    </source>
</reference>
<gene>
    <name evidence="1" type="primary">eno</name>
    <name type="ordered locus">lpp2020</name>
</gene>
<accession>Q5X3L4</accession>
<protein>
    <recommendedName>
        <fullName evidence="1">Enolase</fullName>
        <ecNumber evidence="1">4.2.1.11</ecNumber>
    </recommendedName>
    <alternativeName>
        <fullName evidence="1">2-phospho-D-glycerate hydro-lyase</fullName>
    </alternativeName>
    <alternativeName>
        <fullName evidence="1">2-phosphoglycerate dehydratase</fullName>
    </alternativeName>
</protein>
<organism>
    <name type="scientific">Legionella pneumophila (strain Paris)</name>
    <dbReference type="NCBI Taxonomy" id="297246"/>
    <lineage>
        <taxon>Bacteria</taxon>
        <taxon>Pseudomonadati</taxon>
        <taxon>Pseudomonadota</taxon>
        <taxon>Gammaproteobacteria</taxon>
        <taxon>Legionellales</taxon>
        <taxon>Legionellaceae</taxon>
        <taxon>Legionella</taxon>
    </lineage>
</organism>
<feature type="chain" id="PRO_0000133908" description="Enolase">
    <location>
        <begin position="1"/>
        <end position="422"/>
    </location>
</feature>
<feature type="active site" description="Proton donor" evidence="1">
    <location>
        <position position="204"/>
    </location>
</feature>
<feature type="active site" description="Proton acceptor" evidence="1">
    <location>
        <position position="336"/>
    </location>
</feature>
<feature type="binding site" evidence="1">
    <location>
        <position position="162"/>
    </location>
    <ligand>
        <name>(2R)-2-phosphoglycerate</name>
        <dbReference type="ChEBI" id="CHEBI:58289"/>
    </ligand>
</feature>
<feature type="binding site" evidence="1">
    <location>
        <position position="241"/>
    </location>
    <ligand>
        <name>Mg(2+)</name>
        <dbReference type="ChEBI" id="CHEBI:18420"/>
    </ligand>
</feature>
<feature type="binding site" evidence="1">
    <location>
        <position position="284"/>
    </location>
    <ligand>
        <name>Mg(2+)</name>
        <dbReference type="ChEBI" id="CHEBI:18420"/>
    </ligand>
</feature>
<feature type="binding site" evidence="1">
    <location>
        <position position="311"/>
    </location>
    <ligand>
        <name>Mg(2+)</name>
        <dbReference type="ChEBI" id="CHEBI:18420"/>
    </ligand>
</feature>
<feature type="binding site" evidence="1">
    <location>
        <position position="336"/>
    </location>
    <ligand>
        <name>(2R)-2-phosphoglycerate</name>
        <dbReference type="ChEBI" id="CHEBI:58289"/>
    </ligand>
</feature>
<feature type="binding site" evidence="1">
    <location>
        <position position="365"/>
    </location>
    <ligand>
        <name>(2R)-2-phosphoglycerate</name>
        <dbReference type="ChEBI" id="CHEBI:58289"/>
    </ligand>
</feature>
<feature type="binding site" evidence="1">
    <location>
        <position position="366"/>
    </location>
    <ligand>
        <name>(2R)-2-phosphoglycerate</name>
        <dbReference type="ChEBI" id="CHEBI:58289"/>
    </ligand>
</feature>
<feature type="binding site" evidence="1">
    <location>
        <position position="387"/>
    </location>
    <ligand>
        <name>(2R)-2-phosphoglycerate</name>
        <dbReference type="ChEBI" id="CHEBI:58289"/>
    </ligand>
</feature>